<feature type="chain" id="PRO_0000167629" description="Uncharacterized oxidoreductase AIM33">
    <location>
        <begin position="1"/>
        <end position="312"/>
    </location>
</feature>
<feature type="topological domain" description="Extracellular" evidence="2">
    <location>
        <begin position="1"/>
        <end position="14"/>
    </location>
</feature>
<feature type="transmembrane region" description="Helical" evidence="2">
    <location>
        <begin position="15"/>
        <end position="35"/>
    </location>
</feature>
<feature type="topological domain" description="Cytoplasmic" evidence="2">
    <location>
        <begin position="36"/>
        <end position="41"/>
    </location>
</feature>
<feature type="transmembrane region" description="Helical" evidence="2">
    <location>
        <begin position="42"/>
        <end position="62"/>
    </location>
</feature>
<feature type="topological domain" description="Extracellular" evidence="2">
    <location>
        <begin position="63"/>
        <end position="179"/>
    </location>
</feature>
<feature type="transmembrane region" description="Helical" evidence="2">
    <location>
        <begin position="180"/>
        <end position="200"/>
    </location>
</feature>
<feature type="topological domain" description="Cytoplasmic" evidence="2">
    <location>
        <begin position="201"/>
        <end position="312"/>
    </location>
</feature>
<feature type="domain" description="FAD-binding FR-type" evidence="3">
    <location>
        <begin position="70"/>
        <end position="173"/>
    </location>
</feature>
<protein>
    <recommendedName>
        <fullName>Uncharacterized oxidoreductase AIM33</fullName>
        <ecNumber>1.-.-.-</ecNumber>
    </recommendedName>
    <alternativeName>
        <fullName>Altered inheritance of mitochondria protein 33</fullName>
    </alternativeName>
</protein>
<name>AIM33_YEAST</name>
<dbReference type="EC" id="1.-.-.-"/>
<dbReference type="EMBL" id="Z46660">
    <property type="protein sequence ID" value="CAA86651.1"/>
    <property type="molecule type" value="Genomic_DNA"/>
</dbReference>
<dbReference type="EMBL" id="BK006946">
    <property type="protein sequence ID" value="DAA09810.1"/>
    <property type="molecule type" value="Genomic_DNA"/>
</dbReference>
<dbReference type="PIR" id="S49640">
    <property type="entry name" value="S49640"/>
</dbReference>
<dbReference type="RefSeq" id="NP_013623.1">
    <property type="nucleotide sequence ID" value="NM_001182446.1"/>
</dbReference>
<dbReference type="SMR" id="Q04516"/>
<dbReference type="BioGRID" id="35054">
    <property type="interactions" value="109"/>
</dbReference>
<dbReference type="FunCoup" id="Q04516">
    <property type="interactions" value="132"/>
</dbReference>
<dbReference type="STRING" id="4932.YML087C"/>
<dbReference type="PaxDb" id="4932-YML087C"/>
<dbReference type="PeptideAtlas" id="Q04516"/>
<dbReference type="EnsemblFungi" id="YML087C_mRNA">
    <property type="protein sequence ID" value="YML087C"/>
    <property type="gene ID" value="YML087C"/>
</dbReference>
<dbReference type="GeneID" id="854887"/>
<dbReference type="KEGG" id="sce:YML087C"/>
<dbReference type="AGR" id="SGD:S000004552"/>
<dbReference type="SGD" id="S000004552">
    <property type="gene designation" value="AIM33"/>
</dbReference>
<dbReference type="VEuPathDB" id="FungiDB:YML087C"/>
<dbReference type="eggNOG" id="KOG0534">
    <property type="taxonomic scope" value="Eukaryota"/>
</dbReference>
<dbReference type="GeneTree" id="ENSGT00940000176475"/>
<dbReference type="HOGENOM" id="CLU_003827_9_0_1"/>
<dbReference type="InParanoid" id="Q04516"/>
<dbReference type="OMA" id="DHMAKEY"/>
<dbReference type="OrthoDB" id="432685at2759"/>
<dbReference type="BioCyc" id="YEAST:G3O-32675-MONOMER"/>
<dbReference type="Reactome" id="R-SCE-114608">
    <property type="pathway name" value="Platelet degranulation"/>
</dbReference>
<dbReference type="BioGRID-ORCS" id="854887">
    <property type="hits" value="0 hits in 10 CRISPR screens"/>
</dbReference>
<dbReference type="PRO" id="PR:Q04516"/>
<dbReference type="Proteomes" id="UP000002311">
    <property type="component" value="Chromosome XIII"/>
</dbReference>
<dbReference type="RNAct" id="Q04516">
    <property type="molecule type" value="protein"/>
</dbReference>
<dbReference type="GO" id="GO:0016020">
    <property type="term" value="C:membrane"/>
    <property type="evidence" value="ECO:0007669"/>
    <property type="project" value="UniProtKB-SubCell"/>
</dbReference>
<dbReference type="GO" id="GO:0004128">
    <property type="term" value="F:cytochrome-b5 reductase activity, acting on NAD(P)H"/>
    <property type="evidence" value="ECO:0000318"/>
    <property type="project" value="GO_Central"/>
</dbReference>
<dbReference type="GO" id="GO:0006696">
    <property type="term" value="P:ergosterol biosynthetic process"/>
    <property type="evidence" value="ECO:0000318"/>
    <property type="project" value="GO_Central"/>
</dbReference>
<dbReference type="CDD" id="cd06183">
    <property type="entry name" value="cyt_b5_reduct_like"/>
    <property type="match status" value="1"/>
</dbReference>
<dbReference type="FunFam" id="2.40.30.10:FF:000069">
    <property type="entry name" value="NADH-cytochrome b5 reductase"/>
    <property type="match status" value="1"/>
</dbReference>
<dbReference type="FunFam" id="3.40.50.80:FF:000009">
    <property type="entry name" value="NADH-cytochrome b5 reductase"/>
    <property type="match status" value="1"/>
</dbReference>
<dbReference type="Gene3D" id="3.40.50.80">
    <property type="entry name" value="Nucleotide-binding domain of ferredoxin-NADP reductase (FNR) module"/>
    <property type="match status" value="1"/>
</dbReference>
<dbReference type="Gene3D" id="2.40.30.10">
    <property type="entry name" value="Translation factors"/>
    <property type="match status" value="1"/>
</dbReference>
<dbReference type="InterPro" id="IPR001834">
    <property type="entry name" value="CBR-like"/>
</dbReference>
<dbReference type="InterPro" id="IPR008333">
    <property type="entry name" value="Cbr1-like_FAD-bd_dom"/>
</dbReference>
<dbReference type="InterPro" id="IPR017927">
    <property type="entry name" value="FAD-bd_FR_type"/>
</dbReference>
<dbReference type="InterPro" id="IPR001709">
    <property type="entry name" value="Flavoprot_Pyr_Nucl_cyt_Rdtase"/>
</dbReference>
<dbReference type="InterPro" id="IPR039261">
    <property type="entry name" value="FNR_nucleotide-bd"/>
</dbReference>
<dbReference type="InterPro" id="IPR001433">
    <property type="entry name" value="OxRdtase_FAD/NAD-bd"/>
</dbReference>
<dbReference type="InterPro" id="IPR017938">
    <property type="entry name" value="Riboflavin_synthase-like_b-brl"/>
</dbReference>
<dbReference type="PANTHER" id="PTHR19370">
    <property type="entry name" value="NADH-CYTOCHROME B5 REDUCTASE"/>
    <property type="match status" value="1"/>
</dbReference>
<dbReference type="PANTHER" id="PTHR19370:SF143">
    <property type="entry name" value="PLASMA MEMBRANE-ASSOCIATED COENZYME Q6 REDUCTASE PGA3"/>
    <property type="match status" value="1"/>
</dbReference>
<dbReference type="Pfam" id="PF00970">
    <property type="entry name" value="FAD_binding_6"/>
    <property type="match status" value="1"/>
</dbReference>
<dbReference type="Pfam" id="PF00175">
    <property type="entry name" value="NAD_binding_1"/>
    <property type="match status" value="1"/>
</dbReference>
<dbReference type="PRINTS" id="PR00406">
    <property type="entry name" value="CYTB5RDTASE"/>
</dbReference>
<dbReference type="PRINTS" id="PR00371">
    <property type="entry name" value="FPNCR"/>
</dbReference>
<dbReference type="SUPFAM" id="SSF52343">
    <property type="entry name" value="Ferredoxin reductase-like, C-terminal NADP-linked domain"/>
    <property type="match status" value="1"/>
</dbReference>
<dbReference type="SUPFAM" id="SSF63380">
    <property type="entry name" value="Riboflavin synthase domain-like"/>
    <property type="match status" value="1"/>
</dbReference>
<dbReference type="PROSITE" id="PS51384">
    <property type="entry name" value="FAD_FR"/>
    <property type="match status" value="1"/>
</dbReference>
<proteinExistence type="evidence at protein level"/>
<sequence length="312" mass="35764">MSIVETCISFVSTNPFYPFCTGLLLNCVVTPLYFWKTQNGRIVVVSLLQFVVLYATAFISIGTDKSLYRNKWVALPLSKKTRISRNTSLYCFKLKYPFERLHIPMGYHLAVRVTINGERLVRYYTPVNVPNTEGHLELVVKTYKHGVVSKYFDKLKIRQYVEFKGPLGELEYDQDTATELGIIAGGSGITPVLQVLQEIIPSPEDLTHISLIYANETEDDILMKSQLDHMAKEYPHFKVHYVIHKPNGKWNGDVGYVTLEEMKRYLPKQAEDHRLLICGPPKMNEMVLNYAKELGWSNGFHKGNGTDKVFVF</sequence>
<organism>
    <name type="scientific">Saccharomyces cerevisiae (strain ATCC 204508 / S288c)</name>
    <name type="common">Baker's yeast</name>
    <dbReference type="NCBI Taxonomy" id="559292"/>
    <lineage>
        <taxon>Eukaryota</taxon>
        <taxon>Fungi</taxon>
        <taxon>Dikarya</taxon>
        <taxon>Ascomycota</taxon>
        <taxon>Saccharomycotina</taxon>
        <taxon>Saccharomycetes</taxon>
        <taxon>Saccharomycetales</taxon>
        <taxon>Saccharomycetaceae</taxon>
        <taxon>Saccharomyces</taxon>
    </lineage>
</organism>
<evidence type="ECO:0000250" key="1"/>
<evidence type="ECO:0000255" key="2"/>
<evidence type="ECO:0000255" key="3">
    <source>
        <dbReference type="PROSITE-ProRule" id="PRU00716"/>
    </source>
</evidence>
<evidence type="ECO:0000269" key="4">
    <source>
    </source>
</evidence>
<evidence type="ECO:0000305" key="5"/>
<keyword id="KW-0274">FAD</keyword>
<keyword id="KW-0285">Flavoprotein</keyword>
<keyword id="KW-0472">Membrane</keyword>
<keyword id="KW-0520">NAD</keyword>
<keyword id="KW-0560">Oxidoreductase</keyword>
<keyword id="KW-1185">Reference proteome</keyword>
<keyword id="KW-0812">Transmembrane</keyword>
<keyword id="KW-1133">Transmembrane helix</keyword>
<gene>
    <name type="primary">AIM33</name>
    <name type="ordered locus">YML087C</name>
</gene>
<accession>Q04516</accession>
<accession>D6W0J6</accession>
<reference key="1">
    <citation type="journal article" date="1997" name="Nature">
        <title>The nucleotide sequence of Saccharomyces cerevisiae chromosome XIII.</title>
        <authorList>
            <person name="Bowman S."/>
            <person name="Churcher C.M."/>
            <person name="Badcock K."/>
            <person name="Brown D."/>
            <person name="Chillingworth T."/>
            <person name="Connor R."/>
            <person name="Dedman K."/>
            <person name="Devlin K."/>
            <person name="Gentles S."/>
            <person name="Hamlin N."/>
            <person name="Hunt S."/>
            <person name="Jagels K."/>
            <person name="Lye G."/>
            <person name="Moule S."/>
            <person name="Odell C."/>
            <person name="Pearson D."/>
            <person name="Rajandream M.A."/>
            <person name="Rice P."/>
            <person name="Skelton J."/>
            <person name="Walsh S.V."/>
            <person name="Whitehead S."/>
            <person name="Barrell B.G."/>
        </authorList>
    </citation>
    <scope>NUCLEOTIDE SEQUENCE [LARGE SCALE GENOMIC DNA]</scope>
    <source>
        <strain>ATCC 204508 / S288c</strain>
    </source>
</reference>
<reference key="2">
    <citation type="journal article" date="2014" name="G3 (Bethesda)">
        <title>The reference genome sequence of Saccharomyces cerevisiae: Then and now.</title>
        <authorList>
            <person name="Engel S.R."/>
            <person name="Dietrich F.S."/>
            <person name="Fisk D.G."/>
            <person name="Binkley G."/>
            <person name="Balakrishnan R."/>
            <person name="Costanzo M.C."/>
            <person name="Dwight S.S."/>
            <person name="Hitz B.C."/>
            <person name="Karra K."/>
            <person name="Nash R.S."/>
            <person name="Weng S."/>
            <person name="Wong E.D."/>
            <person name="Lloyd P."/>
            <person name="Skrzypek M.S."/>
            <person name="Miyasato S.R."/>
            <person name="Simison M."/>
            <person name="Cherry J.M."/>
        </authorList>
    </citation>
    <scope>GENOME REANNOTATION</scope>
    <source>
        <strain>ATCC 204508 / S288c</strain>
    </source>
</reference>
<reference key="3">
    <citation type="journal article" date="2006" name="Proc. Natl. Acad. Sci. U.S.A.">
        <title>A global topology map of the Saccharomyces cerevisiae membrane proteome.</title>
        <authorList>
            <person name="Kim H."/>
            <person name="Melen K."/>
            <person name="Oesterberg M."/>
            <person name="von Heijne G."/>
        </authorList>
    </citation>
    <scope>TOPOLOGY [LARGE SCALE ANALYSIS]</scope>
    <source>
        <strain>ATCC 208353 / W303-1A</strain>
    </source>
</reference>
<reference key="4">
    <citation type="journal article" date="2009" name="PLoS Genet.">
        <title>Computationally driven, quantitative experiments discover genes required for mitochondrial biogenesis.</title>
        <authorList>
            <person name="Hess D.C."/>
            <person name="Myers C.L."/>
            <person name="Huttenhower C."/>
            <person name="Hibbs M.A."/>
            <person name="Hayes A.P."/>
            <person name="Paw J."/>
            <person name="Clore J.J."/>
            <person name="Mendoza R.M."/>
            <person name="Luis B.S."/>
            <person name="Nislow C."/>
            <person name="Giaever G."/>
            <person name="Costanzo M."/>
            <person name="Troyanskaya O.G."/>
            <person name="Caudy A.A."/>
        </authorList>
    </citation>
    <scope>DISRUPTION PHENOTYPE</scope>
</reference>
<comment type="cofactor">
    <cofactor evidence="1">
        <name>FAD</name>
        <dbReference type="ChEBI" id="CHEBI:57692"/>
    </cofactor>
</comment>
<comment type="subcellular location">
    <subcellularLocation>
        <location evidence="5">Membrane</location>
        <topology evidence="5">Multi-pass membrane protein</topology>
    </subcellularLocation>
</comment>
<comment type="disruption phenotype">
    <text evidence="4">Increases frequency of mitochondrial genome loss.</text>
</comment>
<comment type="similarity">
    <text evidence="5">Belongs to the flavoprotein pyridine nucleotide cytochrome reductase family.</text>
</comment>